<name>TRPR_ECO24</name>
<sequence>MAQQSPYSAAMAEQRHQEWLRFVDLLKNAYQNDLHLPLLNLMLTPDEREALGTRVRIVEELLRGEMSQRELKNELGAGIATITRGSNSLKAAPVELRQWLEEVLLKSD</sequence>
<organism>
    <name type="scientific">Escherichia coli O139:H28 (strain E24377A / ETEC)</name>
    <dbReference type="NCBI Taxonomy" id="331111"/>
    <lineage>
        <taxon>Bacteria</taxon>
        <taxon>Pseudomonadati</taxon>
        <taxon>Pseudomonadota</taxon>
        <taxon>Gammaproteobacteria</taxon>
        <taxon>Enterobacterales</taxon>
        <taxon>Enterobacteriaceae</taxon>
        <taxon>Escherichia</taxon>
    </lineage>
</organism>
<comment type="function">
    <text evidence="1">This protein is an aporepressor. When complexed with L-tryptophan it binds the operator region of the trp operon (5'-ACTAGT-'3') and prevents the initiation of transcription. The complex also regulates trp repressor biosynthesis by binding to its regulatory region.</text>
</comment>
<comment type="subunit">
    <text evidence="1">Homodimer.</text>
</comment>
<comment type="subcellular location">
    <subcellularLocation>
        <location evidence="1">Cytoplasm</location>
    </subcellularLocation>
</comment>
<comment type="similarity">
    <text evidence="1">Belongs to the TrpR family.</text>
</comment>
<accession>A7ZVT5</accession>
<dbReference type="EMBL" id="CP000800">
    <property type="protein sequence ID" value="ABV17953.1"/>
    <property type="molecule type" value="Genomic_DNA"/>
</dbReference>
<dbReference type="RefSeq" id="WP_000068679.1">
    <property type="nucleotide sequence ID" value="NC_009801.1"/>
</dbReference>
<dbReference type="BMRB" id="A7ZVT5"/>
<dbReference type="SMR" id="A7ZVT5"/>
<dbReference type="GeneID" id="93777452"/>
<dbReference type="KEGG" id="ecw:EcE24377A_4992"/>
<dbReference type="HOGENOM" id="CLU_147939_0_0_6"/>
<dbReference type="Proteomes" id="UP000001122">
    <property type="component" value="Chromosome"/>
</dbReference>
<dbReference type="GO" id="GO:0005737">
    <property type="term" value="C:cytoplasm"/>
    <property type="evidence" value="ECO:0007669"/>
    <property type="project" value="UniProtKB-SubCell"/>
</dbReference>
<dbReference type="GO" id="GO:0003700">
    <property type="term" value="F:DNA-binding transcription factor activity"/>
    <property type="evidence" value="ECO:0007669"/>
    <property type="project" value="InterPro"/>
</dbReference>
<dbReference type="GO" id="GO:0043565">
    <property type="term" value="F:sequence-specific DNA binding"/>
    <property type="evidence" value="ECO:0007669"/>
    <property type="project" value="InterPro"/>
</dbReference>
<dbReference type="GO" id="GO:0045892">
    <property type="term" value="P:negative regulation of DNA-templated transcription"/>
    <property type="evidence" value="ECO:0007669"/>
    <property type="project" value="UniProtKB-UniRule"/>
</dbReference>
<dbReference type="FunFam" id="1.10.1270.10:FF:000001">
    <property type="entry name" value="Trp operon repressor"/>
    <property type="match status" value="1"/>
</dbReference>
<dbReference type="Gene3D" id="1.10.1270.10">
    <property type="entry name" value="TrpR-like"/>
    <property type="match status" value="1"/>
</dbReference>
<dbReference type="HAMAP" id="MF_00475">
    <property type="entry name" value="Trp_repressor"/>
    <property type="match status" value="1"/>
</dbReference>
<dbReference type="InterPro" id="IPR000831">
    <property type="entry name" value="Trp_repress"/>
</dbReference>
<dbReference type="InterPro" id="IPR013335">
    <property type="entry name" value="Trp_repress_bac"/>
</dbReference>
<dbReference type="InterPro" id="IPR010921">
    <property type="entry name" value="Trp_repressor/repl_initiator"/>
</dbReference>
<dbReference type="InterPro" id="IPR038116">
    <property type="entry name" value="TrpR-like_sf"/>
</dbReference>
<dbReference type="NCBIfam" id="TIGR01321">
    <property type="entry name" value="TrpR"/>
    <property type="match status" value="1"/>
</dbReference>
<dbReference type="PANTHER" id="PTHR38025">
    <property type="entry name" value="TRP OPERON REPRESSOR"/>
    <property type="match status" value="1"/>
</dbReference>
<dbReference type="PANTHER" id="PTHR38025:SF1">
    <property type="entry name" value="TRP OPERON REPRESSOR"/>
    <property type="match status" value="1"/>
</dbReference>
<dbReference type="Pfam" id="PF01371">
    <property type="entry name" value="Trp_repressor"/>
    <property type="match status" value="1"/>
</dbReference>
<dbReference type="PIRSF" id="PIRSF003196">
    <property type="entry name" value="Trp_repressor"/>
    <property type="match status" value="1"/>
</dbReference>
<dbReference type="SUPFAM" id="SSF48295">
    <property type="entry name" value="TrpR-like"/>
    <property type="match status" value="1"/>
</dbReference>
<keyword id="KW-0963">Cytoplasm</keyword>
<keyword id="KW-0238">DNA-binding</keyword>
<keyword id="KW-1185">Reference proteome</keyword>
<keyword id="KW-0678">Repressor</keyword>
<keyword id="KW-0804">Transcription</keyword>
<keyword id="KW-0805">Transcription regulation</keyword>
<gene>
    <name evidence="1" type="primary">trpR</name>
    <name type="ordered locus">EcE24377A_4992</name>
</gene>
<proteinExistence type="inferred from homology"/>
<feature type="chain" id="PRO_1000060401" description="Trp operon repressor">
    <location>
        <begin position="1"/>
        <end position="108"/>
    </location>
</feature>
<feature type="DNA-binding region" evidence="1">
    <location>
        <begin position="68"/>
        <end position="91"/>
    </location>
</feature>
<reference key="1">
    <citation type="journal article" date="2008" name="J. Bacteriol.">
        <title>The pangenome structure of Escherichia coli: comparative genomic analysis of E. coli commensal and pathogenic isolates.</title>
        <authorList>
            <person name="Rasko D.A."/>
            <person name="Rosovitz M.J."/>
            <person name="Myers G.S.A."/>
            <person name="Mongodin E.F."/>
            <person name="Fricke W.F."/>
            <person name="Gajer P."/>
            <person name="Crabtree J."/>
            <person name="Sebaihia M."/>
            <person name="Thomson N.R."/>
            <person name="Chaudhuri R."/>
            <person name="Henderson I.R."/>
            <person name="Sperandio V."/>
            <person name="Ravel J."/>
        </authorList>
    </citation>
    <scope>NUCLEOTIDE SEQUENCE [LARGE SCALE GENOMIC DNA]</scope>
    <source>
        <strain>E24377A / ETEC</strain>
    </source>
</reference>
<protein>
    <recommendedName>
        <fullName evidence="1">Trp operon repressor</fullName>
    </recommendedName>
</protein>
<evidence type="ECO:0000255" key="1">
    <source>
        <dbReference type="HAMAP-Rule" id="MF_00475"/>
    </source>
</evidence>